<feature type="chain" id="PRO_0000066067" description="Uncharacterized protein MHJ_0132">
    <location>
        <begin position="1"/>
        <end position="484"/>
    </location>
</feature>
<feature type="transmembrane region" description="Helical" evidence="1">
    <location>
        <begin position="19"/>
        <end position="39"/>
    </location>
</feature>
<feature type="transmembrane region" description="Helical" evidence="1">
    <location>
        <begin position="78"/>
        <end position="98"/>
    </location>
</feature>
<feature type="transmembrane region" description="Helical" evidence="1">
    <location>
        <begin position="110"/>
        <end position="130"/>
    </location>
</feature>
<feature type="transmembrane region" description="Helical" evidence="1">
    <location>
        <begin position="134"/>
        <end position="154"/>
    </location>
</feature>
<feature type="transmembrane region" description="Helical" evidence="1">
    <location>
        <begin position="165"/>
        <end position="185"/>
    </location>
</feature>
<feature type="transmembrane region" description="Helical" evidence="1">
    <location>
        <begin position="199"/>
        <end position="219"/>
    </location>
</feature>
<feature type="transmembrane region" description="Helical" evidence="1">
    <location>
        <begin position="249"/>
        <end position="269"/>
    </location>
</feature>
<feature type="transmembrane region" description="Helical" evidence="1">
    <location>
        <begin position="289"/>
        <end position="309"/>
    </location>
</feature>
<feature type="transmembrane region" description="Helical" evidence="1">
    <location>
        <begin position="321"/>
        <end position="341"/>
    </location>
</feature>
<feature type="transmembrane region" description="Helical" evidence="1">
    <location>
        <begin position="360"/>
        <end position="380"/>
    </location>
</feature>
<feature type="transmembrane region" description="Helical" evidence="1">
    <location>
        <begin position="398"/>
        <end position="418"/>
    </location>
</feature>
<feature type="transmembrane region" description="Helical" evidence="1">
    <location>
        <begin position="440"/>
        <end position="460"/>
    </location>
</feature>
<protein>
    <recommendedName>
        <fullName>Uncharacterized protein MHJ_0132</fullName>
    </recommendedName>
</protein>
<sequence>MKKNFILNFATKNVKEKKLSFGVGITLWALIVFAYMIFVMNWGFASAGLNGKAGISGYLGHFFPNANEAPGTVVNQAVNWGITIGRGIGSVLVGWLIVKISHKYTVILSLFFMLFGIIAPYSPTYAGFIILRTIFAIGGTMQIILIQPVVSNYLNQRQKAVISQFSPFFYPIGTIITLIPFAGIIGQEAQEAFRDNWQIVFLVIGLLTLIPLIGYIILGTKFDLYPSNIEKRNKQEKLSLATFFKQKDTWYWTILYGSWLVAVVFPFTFSKPIFHRLIGDSDGTFNDKISVFLIFFLAGMFLGPFTIGLLSKYQLQRRKYISTIITLGVFFYVLATVVFVLKVGKNYEYAKSYTDGWTWLFLFLGLFMGICLWGIQGVMLNLPHEYKGSNPYRVGFQFGLIWGLGYTAFTIATIITSLVNTPPGIDLKKLELNNVDGYALGAYILIIIFSLVSSIGLALLKEPNPEYKKLLKIRSFSEIERIKK</sequence>
<dbReference type="EMBL" id="AE017243">
    <property type="protein sequence ID" value="AAZ44223.2"/>
    <property type="molecule type" value="Genomic_DNA"/>
</dbReference>
<dbReference type="EMBL" id="X67286">
    <property type="status" value="NOT_ANNOTATED_CDS"/>
    <property type="molecule type" value="Genomic_DNA"/>
</dbReference>
<dbReference type="RefSeq" id="WP_016340193.1">
    <property type="nucleotide sequence ID" value="NC_007295.1"/>
</dbReference>
<dbReference type="GeneID" id="41334433"/>
<dbReference type="KEGG" id="mhj:MHJ_0132"/>
<dbReference type="eggNOG" id="COG2814">
    <property type="taxonomic scope" value="Bacteria"/>
</dbReference>
<dbReference type="HOGENOM" id="CLU_033053_0_0_14"/>
<dbReference type="OrthoDB" id="399989at2"/>
<dbReference type="Proteomes" id="UP000000548">
    <property type="component" value="Chromosome"/>
</dbReference>
<dbReference type="GO" id="GO:0005886">
    <property type="term" value="C:plasma membrane"/>
    <property type="evidence" value="ECO:0007669"/>
    <property type="project" value="UniProtKB-SubCell"/>
</dbReference>
<dbReference type="GO" id="GO:0046943">
    <property type="term" value="F:carboxylic acid transmembrane transporter activity"/>
    <property type="evidence" value="ECO:0007669"/>
    <property type="project" value="TreeGrafter"/>
</dbReference>
<dbReference type="CDD" id="cd06174">
    <property type="entry name" value="MFS"/>
    <property type="match status" value="1"/>
</dbReference>
<dbReference type="Gene3D" id="1.20.1250.20">
    <property type="entry name" value="MFS general substrate transporter like domains"/>
    <property type="match status" value="2"/>
</dbReference>
<dbReference type="InterPro" id="IPR054938">
    <property type="entry name" value="Hexose_phos_transporter"/>
</dbReference>
<dbReference type="InterPro" id="IPR011699">
    <property type="entry name" value="MFS_Mycoplasma"/>
</dbReference>
<dbReference type="InterPro" id="IPR036259">
    <property type="entry name" value="MFS_trans_sf"/>
</dbReference>
<dbReference type="NCBIfam" id="NF043062">
    <property type="entry name" value="MMSYN1_0881"/>
    <property type="match status" value="1"/>
</dbReference>
<dbReference type="PANTHER" id="PTHR23508">
    <property type="entry name" value="CARBOXYLIC ACID TRANSPORTER PROTEIN HOMOLOG"/>
    <property type="match status" value="1"/>
</dbReference>
<dbReference type="PANTHER" id="PTHR23508:SF10">
    <property type="entry name" value="CARBOXYLIC ACID TRANSPORTER PROTEIN HOMOLOG"/>
    <property type="match status" value="1"/>
</dbReference>
<dbReference type="Pfam" id="PF07672">
    <property type="entry name" value="MFS_Mycoplasma"/>
    <property type="match status" value="1"/>
</dbReference>
<dbReference type="SUPFAM" id="SSF103473">
    <property type="entry name" value="MFS general substrate transporter"/>
    <property type="match status" value="1"/>
</dbReference>
<organism>
    <name type="scientific">Mesomycoplasma hyopneumoniae (strain J / ATCC 25934 / NCTC 10110)</name>
    <name type="common">Mycoplasma hyopneumoniae</name>
    <dbReference type="NCBI Taxonomy" id="262719"/>
    <lineage>
        <taxon>Bacteria</taxon>
        <taxon>Bacillati</taxon>
        <taxon>Mycoplasmatota</taxon>
        <taxon>Mycoplasmoidales</taxon>
        <taxon>Metamycoplasmataceae</taxon>
        <taxon>Mesomycoplasma</taxon>
    </lineage>
</organism>
<name>Y132_MESHJ</name>
<reference key="1">
    <citation type="journal article" date="2005" name="J. Bacteriol.">
        <title>Swine and poultry pathogens: the complete genome sequences of two strains of Mycoplasma hyopneumoniae and a strain of Mycoplasma synoviae.</title>
        <authorList>
            <person name="Vasconcelos A.T.R."/>
            <person name="Ferreira H.B."/>
            <person name="Bizarro C.V."/>
            <person name="Bonatto S.L."/>
            <person name="Carvalho M.O."/>
            <person name="Pinto P.M."/>
            <person name="Almeida D.F."/>
            <person name="Almeida L.G.P."/>
            <person name="Almeida R."/>
            <person name="Alves-Junior L."/>
            <person name="Assuncao E.N."/>
            <person name="Azevedo V.A.C."/>
            <person name="Bogo M.R."/>
            <person name="Brigido M.M."/>
            <person name="Brocchi M."/>
            <person name="Burity H.A."/>
            <person name="Camargo A.A."/>
            <person name="Camargo S.S."/>
            <person name="Carepo M.S."/>
            <person name="Carraro D.M."/>
            <person name="de Mattos Cascardo J.C."/>
            <person name="Castro L.A."/>
            <person name="Cavalcanti G."/>
            <person name="Chemale G."/>
            <person name="Collevatti R.G."/>
            <person name="Cunha C.W."/>
            <person name="Dallagiovanna B."/>
            <person name="Dambros B.P."/>
            <person name="Dellagostin O.A."/>
            <person name="Falcao C."/>
            <person name="Fantinatti-Garboggini F."/>
            <person name="Felipe M.S.S."/>
            <person name="Fiorentin L."/>
            <person name="Franco G.R."/>
            <person name="Freitas N.S.A."/>
            <person name="Frias D."/>
            <person name="Grangeiro T.B."/>
            <person name="Grisard E.C."/>
            <person name="Guimaraes C.T."/>
            <person name="Hungria M."/>
            <person name="Jardim S.N."/>
            <person name="Krieger M.A."/>
            <person name="Laurino J.P."/>
            <person name="Lima L.F.A."/>
            <person name="Lopes M.I."/>
            <person name="Loreto E.L.S."/>
            <person name="Madeira H.M.F."/>
            <person name="Manfio G.P."/>
            <person name="Maranhao A.Q."/>
            <person name="Martinkovics C.T."/>
            <person name="Medeiros S.R.B."/>
            <person name="Moreira M.A.M."/>
            <person name="Neiva M."/>
            <person name="Ramalho-Neto C.E."/>
            <person name="Nicolas M.F."/>
            <person name="Oliveira S.C."/>
            <person name="Paixao R.F.C."/>
            <person name="Pedrosa F.O."/>
            <person name="Pena S.D.J."/>
            <person name="Pereira M."/>
            <person name="Pereira-Ferrari L."/>
            <person name="Piffer I."/>
            <person name="Pinto L.S."/>
            <person name="Potrich D.P."/>
            <person name="Salim A.C.M."/>
            <person name="Santos F.R."/>
            <person name="Schmitt R."/>
            <person name="Schneider M.P.C."/>
            <person name="Schrank A."/>
            <person name="Schrank I.S."/>
            <person name="Schuck A.F."/>
            <person name="Seuanez H.N."/>
            <person name="Silva D.W."/>
            <person name="Silva R."/>
            <person name="Silva S.C."/>
            <person name="Soares C.M.A."/>
            <person name="Souza K.R.L."/>
            <person name="Souza R.C."/>
            <person name="Staats C.C."/>
            <person name="Steffens M.B.R."/>
            <person name="Teixeira S.M.R."/>
            <person name="Urmenyi T.P."/>
            <person name="Vainstein M.H."/>
            <person name="Zuccherato L.W."/>
            <person name="Simpson A.J.G."/>
            <person name="Zaha A."/>
        </authorList>
    </citation>
    <scope>NUCLEOTIDE SEQUENCE [LARGE SCALE GENOMIC DNA]</scope>
    <source>
        <strain>J / ATCC 25934 / NCTC 10110</strain>
    </source>
</reference>
<reference key="2">
    <citation type="journal article" date="1993" name="J. Gen. Microbiol.">
        <title>DNA sequence determination and biochemical analysis of the immunogenic protein P36, the lactate dehydrogenase (LDH) of Mycoplasma hyopneumoniae.</title>
        <authorList>
            <person name="Haldimann A."/>
            <person name="Nicolet J."/>
            <person name="Frey J."/>
        </authorList>
    </citation>
    <scope>NUCLEOTIDE SEQUENCE [GENOMIC DNA] OF 419-484</scope>
</reference>
<keyword id="KW-1003">Cell membrane</keyword>
<keyword id="KW-0472">Membrane</keyword>
<keyword id="KW-0812">Transmembrane</keyword>
<keyword id="KW-1133">Transmembrane helix</keyword>
<evidence type="ECO:0000255" key="1"/>
<evidence type="ECO:0000305" key="2"/>
<gene>
    <name type="ordered locus">MHJ_0132</name>
</gene>
<comment type="subcellular location">
    <subcellularLocation>
        <location evidence="2">Cell membrane</location>
        <topology evidence="2">Multi-pass membrane protein</topology>
    </subcellularLocation>
</comment>
<comment type="sequence caution" evidence="2">
    <conflict type="frameshift">
        <sequence resource="EMBL" id="X67286"/>
    </conflict>
</comment>
<proteinExistence type="predicted"/>
<accession>P0C0K1</accession>
<accession>P46188</accession>
<accession>Q4AAJ8</accession>
<accession>Q601F6</accession>